<name>Y2481_CLOTE</name>
<reference key="1">
    <citation type="journal article" date="2003" name="Proc. Natl. Acad. Sci. U.S.A.">
        <title>The genome sequence of Clostridium tetani, the causative agent of tetanus disease.</title>
        <authorList>
            <person name="Brueggemann H."/>
            <person name="Baeumer S."/>
            <person name="Fricke W.F."/>
            <person name="Wiezer A."/>
            <person name="Liesegang H."/>
            <person name="Decker I."/>
            <person name="Herzberg C."/>
            <person name="Martinez-Arias R."/>
            <person name="Merkl R."/>
            <person name="Henne A."/>
            <person name="Gottschalk G."/>
        </authorList>
    </citation>
    <scope>NUCLEOTIDE SEQUENCE [LARGE SCALE GENOMIC DNA]</scope>
    <source>
        <strain>Massachusetts / E88</strain>
    </source>
</reference>
<feature type="chain" id="PRO_0000161973" description="Uncharacterized RNA methyltransferase CTC_02481">
    <location>
        <begin position="1"/>
        <end position="460"/>
    </location>
</feature>
<feature type="domain" description="TRAM" evidence="2">
    <location>
        <begin position="6"/>
        <end position="64"/>
    </location>
</feature>
<feature type="active site" description="Nucleophile" evidence="3">
    <location>
        <position position="412"/>
    </location>
</feature>
<feature type="binding site" evidence="1">
    <location>
        <position position="77"/>
    </location>
    <ligand>
        <name>[4Fe-4S] cluster</name>
        <dbReference type="ChEBI" id="CHEBI:49883"/>
    </ligand>
</feature>
<feature type="binding site" evidence="1">
    <location>
        <position position="83"/>
    </location>
    <ligand>
        <name>[4Fe-4S] cluster</name>
        <dbReference type="ChEBI" id="CHEBI:49883"/>
    </ligand>
</feature>
<feature type="binding site" evidence="1">
    <location>
        <position position="86"/>
    </location>
    <ligand>
        <name>[4Fe-4S] cluster</name>
        <dbReference type="ChEBI" id="CHEBI:49883"/>
    </ligand>
</feature>
<feature type="binding site" evidence="1">
    <location>
        <position position="163"/>
    </location>
    <ligand>
        <name>[4Fe-4S] cluster</name>
        <dbReference type="ChEBI" id="CHEBI:49883"/>
    </ligand>
</feature>
<feature type="binding site" evidence="3">
    <location>
        <position position="287"/>
    </location>
    <ligand>
        <name>S-adenosyl-L-methionine</name>
        <dbReference type="ChEBI" id="CHEBI:59789"/>
    </ligand>
</feature>
<feature type="binding site" evidence="3">
    <location>
        <position position="316"/>
    </location>
    <ligand>
        <name>S-adenosyl-L-methionine</name>
        <dbReference type="ChEBI" id="CHEBI:59789"/>
    </ligand>
</feature>
<feature type="binding site" evidence="3">
    <location>
        <position position="337"/>
    </location>
    <ligand>
        <name>S-adenosyl-L-methionine</name>
        <dbReference type="ChEBI" id="CHEBI:59789"/>
    </ligand>
</feature>
<feature type="binding site" evidence="3">
    <location>
        <position position="385"/>
    </location>
    <ligand>
        <name>S-adenosyl-L-methionine</name>
        <dbReference type="ChEBI" id="CHEBI:59789"/>
    </ligand>
</feature>
<accession>Q891A0</accession>
<organism>
    <name type="scientific">Clostridium tetani (strain Massachusetts / E88)</name>
    <dbReference type="NCBI Taxonomy" id="212717"/>
    <lineage>
        <taxon>Bacteria</taxon>
        <taxon>Bacillati</taxon>
        <taxon>Bacillota</taxon>
        <taxon>Clostridia</taxon>
        <taxon>Eubacteriales</taxon>
        <taxon>Clostridiaceae</taxon>
        <taxon>Clostridium</taxon>
    </lineage>
</organism>
<evidence type="ECO:0000250" key="1"/>
<evidence type="ECO:0000255" key="2">
    <source>
        <dbReference type="PROSITE-ProRule" id="PRU00208"/>
    </source>
</evidence>
<evidence type="ECO:0000255" key="3">
    <source>
        <dbReference type="PROSITE-ProRule" id="PRU01024"/>
    </source>
</evidence>
<sequence>MKKDIPVKKNSTYNLYITGMGTKGEGIGKINNFTIFVTGAILGEEVEVNIIKVNKNYAVGKLLNIITPSANRVEPPCDIYTKCGGCQLQHMSYKEQLNFKRQKVKDALLRLGGIDVEVEEVLGMENPYRYRNKVQLPIGKEKGKVNIGFYAPRSHNIIDLKSCFIQDEKADKIIKILKEWIEKFNVSIYDEKEHKGNLRHIMVRTAFRTGQIMIVLVTKDKKLPHKEELINKLTEDLEGVVSIIQNMNSQKTNVVLGKESIVLWGKDKIIDYIGNFKFAITPLSFFQVNPIQTEVLYNKALEYADLKGDEVVFDAYCGTGTISLFLSQKAKKVYGVEIVNEAIESAKLNARENNVDNVDFIVGESEQIIPELIEKGIKADVVVVDPPRKGCEKSLLEAMAKMAPEKIVYVSCDPATLARDLGVLEELGYKTMKVQPVDMFSNTYHVETIILMTYYGDKKK</sequence>
<keyword id="KW-0004">4Fe-4S</keyword>
<keyword id="KW-0408">Iron</keyword>
<keyword id="KW-0411">Iron-sulfur</keyword>
<keyword id="KW-0479">Metal-binding</keyword>
<keyword id="KW-0489">Methyltransferase</keyword>
<keyword id="KW-1185">Reference proteome</keyword>
<keyword id="KW-0949">S-adenosyl-L-methionine</keyword>
<keyword id="KW-0808">Transferase</keyword>
<gene>
    <name type="ordered locus">CTC_02481</name>
</gene>
<protein>
    <recommendedName>
        <fullName>Uncharacterized RNA methyltransferase CTC_02481</fullName>
        <ecNumber>2.1.1.-</ecNumber>
    </recommendedName>
</protein>
<proteinExistence type="inferred from homology"/>
<comment type="similarity">
    <text evidence="3">Belongs to the class I-like SAM-binding methyltransferase superfamily. RNA M5U methyltransferase family.</text>
</comment>
<dbReference type="EC" id="2.1.1.-"/>
<dbReference type="EMBL" id="AE015927">
    <property type="protein sequence ID" value="AAO36945.1"/>
    <property type="molecule type" value="Genomic_DNA"/>
</dbReference>
<dbReference type="RefSeq" id="WP_011100606.1">
    <property type="nucleotide sequence ID" value="NC_004557.1"/>
</dbReference>
<dbReference type="SMR" id="Q891A0"/>
<dbReference type="STRING" id="212717.CTC_02481"/>
<dbReference type="GeneID" id="24254786"/>
<dbReference type="KEGG" id="ctc:CTC_02481"/>
<dbReference type="HOGENOM" id="CLU_014689_7_0_9"/>
<dbReference type="OrthoDB" id="9804590at2"/>
<dbReference type="Proteomes" id="UP000001412">
    <property type="component" value="Chromosome"/>
</dbReference>
<dbReference type="GO" id="GO:0051539">
    <property type="term" value="F:4 iron, 4 sulfur cluster binding"/>
    <property type="evidence" value="ECO:0007669"/>
    <property type="project" value="UniProtKB-KW"/>
</dbReference>
<dbReference type="GO" id="GO:0046872">
    <property type="term" value="F:metal ion binding"/>
    <property type="evidence" value="ECO:0007669"/>
    <property type="project" value="UniProtKB-KW"/>
</dbReference>
<dbReference type="GO" id="GO:0070041">
    <property type="term" value="F:rRNA (uridine-C5-)-methyltransferase activity"/>
    <property type="evidence" value="ECO:0007669"/>
    <property type="project" value="TreeGrafter"/>
</dbReference>
<dbReference type="GO" id="GO:0070475">
    <property type="term" value="P:rRNA base methylation"/>
    <property type="evidence" value="ECO:0007669"/>
    <property type="project" value="TreeGrafter"/>
</dbReference>
<dbReference type="CDD" id="cd02440">
    <property type="entry name" value="AdoMet_MTases"/>
    <property type="match status" value="1"/>
</dbReference>
<dbReference type="FunFam" id="3.40.50.150:FF:000009">
    <property type="entry name" value="23S rRNA (Uracil(1939)-C(5))-methyltransferase RlmD"/>
    <property type="match status" value="1"/>
</dbReference>
<dbReference type="FunFam" id="2.40.50.140:FF:000097">
    <property type="entry name" value="23S rRNA (uracil(1939)-C(5))-methyltransferase RlmD"/>
    <property type="match status" value="1"/>
</dbReference>
<dbReference type="FunFam" id="2.40.50.1070:FF:000003">
    <property type="entry name" value="23S rRNA (Uracil-5-)-methyltransferase RumA"/>
    <property type="match status" value="1"/>
</dbReference>
<dbReference type="Gene3D" id="2.40.50.1070">
    <property type="match status" value="1"/>
</dbReference>
<dbReference type="Gene3D" id="2.40.50.140">
    <property type="entry name" value="Nucleic acid-binding proteins"/>
    <property type="match status" value="1"/>
</dbReference>
<dbReference type="Gene3D" id="3.40.50.150">
    <property type="entry name" value="Vaccinia Virus protein VP39"/>
    <property type="match status" value="1"/>
</dbReference>
<dbReference type="InterPro" id="IPR030390">
    <property type="entry name" value="MeTrfase_TrmA_AS"/>
</dbReference>
<dbReference type="InterPro" id="IPR012340">
    <property type="entry name" value="NA-bd_OB-fold"/>
</dbReference>
<dbReference type="InterPro" id="IPR029063">
    <property type="entry name" value="SAM-dependent_MTases_sf"/>
</dbReference>
<dbReference type="InterPro" id="IPR002792">
    <property type="entry name" value="TRAM_dom"/>
</dbReference>
<dbReference type="InterPro" id="IPR010280">
    <property type="entry name" value="U5_MeTrfase_fam"/>
</dbReference>
<dbReference type="NCBIfam" id="TIGR00479">
    <property type="entry name" value="rumA"/>
    <property type="match status" value="1"/>
</dbReference>
<dbReference type="PANTHER" id="PTHR11061">
    <property type="entry name" value="RNA M5U METHYLTRANSFERASE"/>
    <property type="match status" value="1"/>
</dbReference>
<dbReference type="PANTHER" id="PTHR11061:SF30">
    <property type="entry name" value="TRNA (URACIL(54)-C(5))-METHYLTRANSFERASE"/>
    <property type="match status" value="1"/>
</dbReference>
<dbReference type="Pfam" id="PF01938">
    <property type="entry name" value="TRAM"/>
    <property type="match status" value="1"/>
</dbReference>
<dbReference type="Pfam" id="PF05958">
    <property type="entry name" value="tRNA_U5-meth_tr"/>
    <property type="match status" value="1"/>
</dbReference>
<dbReference type="SUPFAM" id="SSF50249">
    <property type="entry name" value="Nucleic acid-binding proteins"/>
    <property type="match status" value="1"/>
</dbReference>
<dbReference type="SUPFAM" id="SSF53335">
    <property type="entry name" value="S-adenosyl-L-methionine-dependent methyltransferases"/>
    <property type="match status" value="1"/>
</dbReference>
<dbReference type="PROSITE" id="PS51687">
    <property type="entry name" value="SAM_MT_RNA_M5U"/>
    <property type="match status" value="1"/>
</dbReference>
<dbReference type="PROSITE" id="PS50926">
    <property type="entry name" value="TRAM"/>
    <property type="match status" value="1"/>
</dbReference>
<dbReference type="PROSITE" id="PS01230">
    <property type="entry name" value="TRMA_1"/>
    <property type="match status" value="1"/>
</dbReference>